<comment type="function">
    <text evidence="1">Catalyzes the NADPH-dependent reduction of N-acetyl-5-glutamyl phosphate to yield N-acetyl-L-glutamate 5-semialdehyde.</text>
</comment>
<comment type="catalytic activity">
    <reaction evidence="1">
        <text>N-acetyl-L-glutamate 5-semialdehyde + phosphate + NADP(+) = N-acetyl-L-glutamyl 5-phosphate + NADPH + H(+)</text>
        <dbReference type="Rhea" id="RHEA:21588"/>
        <dbReference type="ChEBI" id="CHEBI:15378"/>
        <dbReference type="ChEBI" id="CHEBI:29123"/>
        <dbReference type="ChEBI" id="CHEBI:43474"/>
        <dbReference type="ChEBI" id="CHEBI:57783"/>
        <dbReference type="ChEBI" id="CHEBI:57936"/>
        <dbReference type="ChEBI" id="CHEBI:58349"/>
        <dbReference type="EC" id="1.2.1.38"/>
    </reaction>
</comment>
<comment type="pathway">
    <text evidence="1">Amino-acid biosynthesis; L-arginine biosynthesis; N(2)-acetyl-L-ornithine from L-glutamate: step 3/4.</text>
</comment>
<comment type="subcellular location">
    <subcellularLocation>
        <location evidence="1">Cytoplasm</location>
    </subcellularLocation>
</comment>
<comment type="similarity">
    <text evidence="1">Belongs to the NAGSA dehydrogenase family. Type 1 subfamily.</text>
</comment>
<evidence type="ECO:0000255" key="1">
    <source>
        <dbReference type="HAMAP-Rule" id="MF_00150"/>
    </source>
</evidence>
<proteinExistence type="inferred from homology"/>
<organism>
    <name type="scientific">Limosilactobacillus fermentum (strain NBRC 3956 / LMG 18251)</name>
    <name type="common">Lactobacillus fermentum</name>
    <dbReference type="NCBI Taxonomy" id="334390"/>
    <lineage>
        <taxon>Bacteria</taxon>
        <taxon>Bacillati</taxon>
        <taxon>Bacillota</taxon>
        <taxon>Bacilli</taxon>
        <taxon>Lactobacillales</taxon>
        <taxon>Lactobacillaceae</taxon>
        <taxon>Limosilactobacillus</taxon>
    </lineage>
</organism>
<name>ARGC_LIMF3</name>
<reference key="1">
    <citation type="journal article" date="2008" name="DNA Res.">
        <title>Comparative genome analysis of Lactobacillus reuteri and Lactobacillus fermentum reveal a genomic island for reuterin and cobalamin production.</title>
        <authorList>
            <person name="Morita H."/>
            <person name="Toh H."/>
            <person name="Fukuda S."/>
            <person name="Horikawa H."/>
            <person name="Oshima K."/>
            <person name="Suzuki T."/>
            <person name="Murakami M."/>
            <person name="Hisamatsu S."/>
            <person name="Kato Y."/>
            <person name="Takizawa T."/>
            <person name="Fukuoka H."/>
            <person name="Yoshimura T."/>
            <person name="Itoh K."/>
            <person name="O'Sullivan D.J."/>
            <person name="McKay L.L."/>
            <person name="Ohno H."/>
            <person name="Kikuchi J."/>
            <person name="Masaoka T."/>
            <person name="Hattori M."/>
        </authorList>
    </citation>
    <scope>NUCLEOTIDE SEQUENCE [LARGE SCALE GENOMIC DNA]</scope>
    <source>
        <strain>NBRC 3956 / LMG 18251</strain>
    </source>
</reference>
<gene>
    <name evidence="1" type="primary">argC</name>
    <name type="ordered locus">LAF_0726</name>
</gene>
<dbReference type="EC" id="1.2.1.38" evidence="1"/>
<dbReference type="EMBL" id="AP008937">
    <property type="protein sequence ID" value="BAG27062.1"/>
    <property type="molecule type" value="Genomic_DNA"/>
</dbReference>
<dbReference type="RefSeq" id="WP_012391099.1">
    <property type="nucleotide sequence ID" value="NC_010610.1"/>
</dbReference>
<dbReference type="SMR" id="B2GBN0"/>
<dbReference type="KEGG" id="lfe:LAF_0726"/>
<dbReference type="PATRIC" id="fig|334390.5.peg.788"/>
<dbReference type="eggNOG" id="COG0002">
    <property type="taxonomic scope" value="Bacteria"/>
</dbReference>
<dbReference type="HOGENOM" id="CLU_006384_0_1_9"/>
<dbReference type="UniPathway" id="UPA00068">
    <property type="reaction ID" value="UER00108"/>
</dbReference>
<dbReference type="Proteomes" id="UP000001697">
    <property type="component" value="Chromosome"/>
</dbReference>
<dbReference type="GO" id="GO:0005737">
    <property type="term" value="C:cytoplasm"/>
    <property type="evidence" value="ECO:0007669"/>
    <property type="project" value="UniProtKB-SubCell"/>
</dbReference>
<dbReference type="GO" id="GO:0003942">
    <property type="term" value="F:N-acetyl-gamma-glutamyl-phosphate reductase activity"/>
    <property type="evidence" value="ECO:0007669"/>
    <property type="project" value="UniProtKB-UniRule"/>
</dbReference>
<dbReference type="GO" id="GO:0051287">
    <property type="term" value="F:NAD binding"/>
    <property type="evidence" value="ECO:0007669"/>
    <property type="project" value="InterPro"/>
</dbReference>
<dbReference type="GO" id="GO:0070401">
    <property type="term" value="F:NADP+ binding"/>
    <property type="evidence" value="ECO:0007669"/>
    <property type="project" value="InterPro"/>
</dbReference>
<dbReference type="GO" id="GO:0006526">
    <property type="term" value="P:L-arginine biosynthetic process"/>
    <property type="evidence" value="ECO:0007669"/>
    <property type="project" value="UniProtKB-UniRule"/>
</dbReference>
<dbReference type="CDD" id="cd23934">
    <property type="entry name" value="AGPR_1_C"/>
    <property type="match status" value="1"/>
</dbReference>
<dbReference type="CDD" id="cd17895">
    <property type="entry name" value="AGPR_1_N"/>
    <property type="match status" value="1"/>
</dbReference>
<dbReference type="FunFam" id="3.30.360.10:FF:000014">
    <property type="entry name" value="N-acetyl-gamma-glutamyl-phosphate reductase"/>
    <property type="match status" value="1"/>
</dbReference>
<dbReference type="Gene3D" id="3.30.360.10">
    <property type="entry name" value="Dihydrodipicolinate Reductase, domain 2"/>
    <property type="match status" value="1"/>
</dbReference>
<dbReference type="Gene3D" id="3.40.50.720">
    <property type="entry name" value="NAD(P)-binding Rossmann-like Domain"/>
    <property type="match status" value="1"/>
</dbReference>
<dbReference type="HAMAP" id="MF_00150">
    <property type="entry name" value="ArgC_type1"/>
    <property type="match status" value="1"/>
</dbReference>
<dbReference type="InterPro" id="IPR023013">
    <property type="entry name" value="AGPR_AS"/>
</dbReference>
<dbReference type="InterPro" id="IPR000706">
    <property type="entry name" value="AGPR_type-1"/>
</dbReference>
<dbReference type="InterPro" id="IPR036291">
    <property type="entry name" value="NAD(P)-bd_dom_sf"/>
</dbReference>
<dbReference type="InterPro" id="IPR050085">
    <property type="entry name" value="NAGSA_dehydrogenase"/>
</dbReference>
<dbReference type="InterPro" id="IPR000534">
    <property type="entry name" value="Semialdehyde_DH_NAD-bd"/>
</dbReference>
<dbReference type="NCBIfam" id="TIGR01850">
    <property type="entry name" value="argC"/>
    <property type="match status" value="1"/>
</dbReference>
<dbReference type="PANTHER" id="PTHR32338:SF10">
    <property type="entry name" value="N-ACETYL-GAMMA-GLUTAMYL-PHOSPHATE REDUCTASE, CHLOROPLASTIC-RELATED"/>
    <property type="match status" value="1"/>
</dbReference>
<dbReference type="PANTHER" id="PTHR32338">
    <property type="entry name" value="N-ACETYL-GAMMA-GLUTAMYL-PHOSPHATE REDUCTASE, CHLOROPLASTIC-RELATED-RELATED"/>
    <property type="match status" value="1"/>
</dbReference>
<dbReference type="Pfam" id="PF01118">
    <property type="entry name" value="Semialdhyde_dh"/>
    <property type="match status" value="1"/>
</dbReference>
<dbReference type="Pfam" id="PF22698">
    <property type="entry name" value="Semialdhyde_dhC_1"/>
    <property type="match status" value="1"/>
</dbReference>
<dbReference type="SMART" id="SM00859">
    <property type="entry name" value="Semialdhyde_dh"/>
    <property type="match status" value="1"/>
</dbReference>
<dbReference type="SUPFAM" id="SSF55347">
    <property type="entry name" value="Glyceraldehyde-3-phosphate dehydrogenase-like, C-terminal domain"/>
    <property type="match status" value="1"/>
</dbReference>
<dbReference type="SUPFAM" id="SSF51735">
    <property type="entry name" value="NAD(P)-binding Rossmann-fold domains"/>
    <property type="match status" value="1"/>
</dbReference>
<dbReference type="PROSITE" id="PS01224">
    <property type="entry name" value="ARGC"/>
    <property type="match status" value="1"/>
</dbReference>
<feature type="chain" id="PRO_1000096727" description="N-acetyl-gamma-glutamyl-phosphate reductase">
    <location>
        <begin position="1"/>
        <end position="341"/>
    </location>
</feature>
<feature type="active site" evidence="1">
    <location>
        <position position="146"/>
    </location>
</feature>
<accession>B2GBN0</accession>
<protein>
    <recommendedName>
        <fullName evidence="1">N-acetyl-gamma-glutamyl-phosphate reductase</fullName>
        <shortName evidence="1">AGPR</shortName>
        <ecNumber evidence="1">1.2.1.38</ecNumber>
    </recommendedName>
    <alternativeName>
        <fullName evidence="1">N-acetyl-glutamate semialdehyde dehydrogenase</fullName>
        <shortName evidence="1">NAGSA dehydrogenase</shortName>
    </alternativeName>
</protein>
<keyword id="KW-0028">Amino-acid biosynthesis</keyword>
<keyword id="KW-0055">Arginine biosynthesis</keyword>
<keyword id="KW-0963">Cytoplasm</keyword>
<keyword id="KW-0521">NADP</keyword>
<keyword id="KW-0560">Oxidoreductase</keyword>
<keyword id="KW-1185">Reference proteome</keyword>
<sequence>MKVALIGITGYGGMVLYQMLKTHPGIDQVDLYARHLAGPTPLNQLVPNLFDDQPVYPYDSQKILANDGAVFFATPAGVTKTAARPYLTAHFPVIDLSGDYRLKNGATYEKWYHQSPAATADLKVAHYGLTDFCDATDENLIANPGCYATATLLGLAPLIIDQLIDLDTIVVDAKSGTSGAGKKPTSSTHFTQVNENAQLYNVNHHKHIPEIVQQLQAWDPAVDAIQFSTTLLPITRGILATIYAKPKPGVNKDQVVAAFKQTYATDPFVRYTGENLPTIKQVVGTNYCDLGVLFNERANTIMVASVIDNLIKGAGGQAIQNFNQRFNFAPTAGLPTAPLLP</sequence>